<dbReference type="EC" id="2.7.13.3" evidence="1"/>
<dbReference type="EMBL" id="AP009324">
    <property type="protein sequence ID" value="BAF76902.1"/>
    <property type="molecule type" value="Genomic_DNA"/>
</dbReference>
<dbReference type="RefSeq" id="WP_000871607.1">
    <property type="nucleotide sequence ID" value="NC_009782.1"/>
</dbReference>
<dbReference type="SMR" id="A7WWQ7"/>
<dbReference type="KEGG" id="saw:SAHV_0019"/>
<dbReference type="HOGENOM" id="CLU_000445_89_2_9"/>
<dbReference type="GO" id="GO:0005886">
    <property type="term" value="C:plasma membrane"/>
    <property type="evidence" value="ECO:0007669"/>
    <property type="project" value="UniProtKB-SubCell"/>
</dbReference>
<dbReference type="GO" id="GO:0005524">
    <property type="term" value="F:ATP binding"/>
    <property type="evidence" value="ECO:0007669"/>
    <property type="project" value="UniProtKB-KW"/>
</dbReference>
<dbReference type="GO" id="GO:0046872">
    <property type="term" value="F:metal ion binding"/>
    <property type="evidence" value="ECO:0007669"/>
    <property type="project" value="UniProtKB-KW"/>
</dbReference>
<dbReference type="GO" id="GO:0000156">
    <property type="term" value="F:phosphorelay response regulator activity"/>
    <property type="evidence" value="ECO:0007669"/>
    <property type="project" value="TreeGrafter"/>
</dbReference>
<dbReference type="GO" id="GO:0000155">
    <property type="term" value="F:phosphorelay sensor kinase activity"/>
    <property type="evidence" value="ECO:0007669"/>
    <property type="project" value="InterPro"/>
</dbReference>
<dbReference type="GO" id="GO:0030295">
    <property type="term" value="F:protein kinase activator activity"/>
    <property type="evidence" value="ECO:0007669"/>
    <property type="project" value="TreeGrafter"/>
</dbReference>
<dbReference type="GO" id="GO:0007234">
    <property type="term" value="P:osmosensory signaling via phosphorelay pathway"/>
    <property type="evidence" value="ECO:0007669"/>
    <property type="project" value="TreeGrafter"/>
</dbReference>
<dbReference type="CDD" id="cd06225">
    <property type="entry name" value="HAMP"/>
    <property type="match status" value="1"/>
</dbReference>
<dbReference type="CDD" id="cd00075">
    <property type="entry name" value="HATPase"/>
    <property type="match status" value="1"/>
</dbReference>
<dbReference type="CDD" id="cd00082">
    <property type="entry name" value="HisKA"/>
    <property type="match status" value="1"/>
</dbReference>
<dbReference type="CDD" id="cd00130">
    <property type="entry name" value="PAS"/>
    <property type="match status" value="1"/>
</dbReference>
<dbReference type="FunFam" id="1.10.8.500:FF:000001">
    <property type="entry name" value="Cell wall metabolism sensor histidine kinase"/>
    <property type="match status" value="1"/>
</dbReference>
<dbReference type="FunFam" id="3.30.450.20:FF:000037">
    <property type="entry name" value="Cell wall metabolism sensor histidine kinase"/>
    <property type="match status" value="1"/>
</dbReference>
<dbReference type="FunFam" id="3.30.565.10:FF:000006">
    <property type="entry name" value="Sensor histidine kinase WalK"/>
    <property type="match status" value="1"/>
</dbReference>
<dbReference type="FunFam" id="1.10.287.130:FF:000001">
    <property type="entry name" value="Two-component sensor histidine kinase"/>
    <property type="match status" value="1"/>
</dbReference>
<dbReference type="Gene3D" id="1.10.287.130">
    <property type="match status" value="1"/>
</dbReference>
<dbReference type="Gene3D" id="1.10.8.500">
    <property type="entry name" value="HAMP domain in histidine kinase"/>
    <property type="match status" value="1"/>
</dbReference>
<dbReference type="Gene3D" id="3.30.565.10">
    <property type="entry name" value="Histidine kinase-like ATPase, C-terminal domain"/>
    <property type="match status" value="1"/>
</dbReference>
<dbReference type="Gene3D" id="3.30.450.20">
    <property type="entry name" value="PAS domain"/>
    <property type="match status" value="2"/>
</dbReference>
<dbReference type="InterPro" id="IPR003660">
    <property type="entry name" value="HAMP_dom"/>
</dbReference>
<dbReference type="InterPro" id="IPR036890">
    <property type="entry name" value="HATPase_C_sf"/>
</dbReference>
<dbReference type="InterPro" id="IPR005467">
    <property type="entry name" value="His_kinase_dom"/>
</dbReference>
<dbReference type="InterPro" id="IPR003661">
    <property type="entry name" value="HisK_dim/P_dom"/>
</dbReference>
<dbReference type="InterPro" id="IPR036097">
    <property type="entry name" value="HisK_dim/P_sf"/>
</dbReference>
<dbReference type="InterPro" id="IPR052545">
    <property type="entry name" value="Light-responsive_reg"/>
</dbReference>
<dbReference type="InterPro" id="IPR000014">
    <property type="entry name" value="PAS"/>
</dbReference>
<dbReference type="InterPro" id="IPR000700">
    <property type="entry name" value="PAS-assoc_C"/>
</dbReference>
<dbReference type="InterPro" id="IPR035965">
    <property type="entry name" value="PAS-like_dom_sf"/>
</dbReference>
<dbReference type="InterPro" id="IPR049814">
    <property type="entry name" value="Resp_reg_WalK"/>
</dbReference>
<dbReference type="InterPro" id="IPR029151">
    <property type="entry name" value="Sensor-like_sf"/>
</dbReference>
<dbReference type="InterPro" id="IPR004358">
    <property type="entry name" value="Sig_transdc_His_kin-like_C"/>
</dbReference>
<dbReference type="NCBIfam" id="NF033092">
    <property type="entry name" value="HK_WalK"/>
    <property type="match status" value="1"/>
</dbReference>
<dbReference type="NCBIfam" id="TIGR00229">
    <property type="entry name" value="sensory_box"/>
    <property type="match status" value="1"/>
</dbReference>
<dbReference type="PANTHER" id="PTHR42878:SF7">
    <property type="entry name" value="SENSOR HISTIDINE KINASE GLRK"/>
    <property type="match status" value="1"/>
</dbReference>
<dbReference type="PANTHER" id="PTHR42878">
    <property type="entry name" value="TWO-COMPONENT HISTIDINE KINASE"/>
    <property type="match status" value="1"/>
</dbReference>
<dbReference type="Pfam" id="PF23846">
    <property type="entry name" value="Cache_WalK"/>
    <property type="match status" value="1"/>
</dbReference>
<dbReference type="Pfam" id="PF00672">
    <property type="entry name" value="HAMP"/>
    <property type="match status" value="1"/>
</dbReference>
<dbReference type="Pfam" id="PF02518">
    <property type="entry name" value="HATPase_c"/>
    <property type="match status" value="1"/>
</dbReference>
<dbReference type="Pfam" id="PF00512">
    <property type="entry name" value="HisKA"/>
    <property type="match status" value="1"/>
</dbReference>
<dbReference type="Pfam" id="PF13426">
    <property type="entry name" value="PAS_9"/>
    <property type="match status" value="1"/>
</dbReference>
<dbReference type="PRINTS" id="PR00344">
    <property type="entry name" value="BCTRLSENSOR"/>
</dbReference>
<dbReference type="SMART" id="SM00304">
    <property type="entry name" value="HAMP"/>
    <property type="match status" value="1"/>
</dbReference>
<dbReference type="SMART" id="SM00387">
    <property type="entry name" value="HATPase_c"/>
    <property type="match status" value="1"/>
</dbReference>
<dbReference type="SMART" id="SM00388">
    <property type="entry name" value="HisKA"/>
    <property type="match status" value="1"/>
</dbReference>
<dbReference type="SMART" id="SM00091">
    <property type="entry name" value="PAS"/>
    <property type="match status" value="1"/>
</dbReference>
<dbReference type="SUPFAM" id="SSF55874">
    <property type="entry name" value="ATPase domain of HSP90 chaperone/DNA topoisomerase II/histidine kinase"/>
    <property type="match status" value="1"/>
</dbReference>
<dbReference type="SUPFAM" id="SSF158472">
    <property type="entry name" value="HAMP domain-like"/>
    <property type="match status" value="1"/>
</dbReference>
<dbReference type="SUPFAM" id="SSF47384">
    <property type="entry name" value="Homodimeric domain of signal transducing histidine kinase"/>
    <property type="match status" value="1"/>
</dbReference>
<dbReference type="SUPFAM" id="SSF55785">
    <property type="entry name" value="PYP-like sensor domain (PAS domain)"/>
    <property type="match status" value="1"/>
</dbReference>
<dbReference type="SUPFAM" id="SSF103190">
    <property type="entry name" value="Sensory domain-like"/>
    <property type="match status" value="1"/>
</dbReference>
<dbReference type="PROSITE" id="PS50885">
    <property type="entry name" value="HAMP"/>
    <property type="match status" value="1"/>
</dbReference>
<dbReference type="PROSITE" id="PS50109">
    <property type="entry name" value="HIS_KIN"/>
    <property type="match status" value="1"/>
</dbReference>
<dbReference type="PROSITE" id="PS50113">
    <property type="entry name" value="PAC"/>
    <property type="match status" value="1"/>
</dbReference>
<dbReference type="PROSITE" id="PS50112">
    <property type="entry name" value="PAS"/>
    <property type="match status" value="1"/>
</dbReference>
<feature type="chain" id="PRO_0000353057" description="Sensor protein kinase WalK">
    <location>
        <begin position="1"/>
        <end position="608"/>
    </location>
</feature>
<feature type="transmembrane region" description="Helical" evidence="4">
    <location>
        <begin position="14"/>
        <end position="34"/>
    </location>
</feature>
<feature type="transmembrane region" description="Helical" evidence="4">
    <location>
        <begin position="183"/>
        <end position="203"/>
    </location>
</feature>
<feature type="domain" description="HAMP" evidence="5">
    <location>
        <begin position="204"/>
        <end position="256"/>
    </location>
</feature>
<feature type="domain" description="PAS" evidence="7">
    <location>
        <begin position="261"/>
        <end position="331"/>
    </location>
</feature>
<feature type="domain" description="PAC" evidence="8">
    <location>
        <begin position="314"/>
        <end position="378"/>
    </location>
</feature>
<feature type="domain" description="Histidine kinase" evidence="6">
    <location>
        <begin position="382"/>
        <end position="600"/>
    </location>
</feature>
<feature type="binding site" evidence="3">
    <location>
        <position position="271"/>
    </location>
    <ligand>
        <name>Zn(2+)</name>
        <dbReference type="ChEBI" id="CHEBI:29105"/>
    </ligand>
</feature>
<feature type="binding site" evidence="3">
    <location>
        <position position="274"/>
    </location>
    <ligand>
        <name>Zn(2+)</name>
        <dbReference type="ChEBI" id="CHEBI:29105"/>
    </ligand>
</feature>
<feature type="binding site" evidence="3">
    <location>
        <position position="364"/>
    </location>
    <ligand>
        <name>Zn(2+)</name>
        <dbReference type="ChEBI" id="CHEBI:29105"/>
    </ligand>
</feature>
<feature type="binding site" evidence="3">
    <location>
        <position position="368"/>
    </location>
    <ligand>
        <name>Zn(2+)</name>
        <dbReference type="ChEBI" id="CHEBI:29105"/>
    </ligand>
</feature>
<feature type="modified residue" description="Phosphohistidine; by autocatalysis" evidence="6">
    <location>
        <position position="385"/>
    </location>
</feature>
<name>WALK_STAA1</name>
<comment type="function">
    <text evidence="3">Member of the two-component regulatory system WalK/WalR that regulates genes involved in cell wall metabolism, virulence regulation, biofilm production, oxidative stress resistance and antibiotic resistance via direct or indirect regulation of autolysins. Functions as a sensor protein kinase which is autophosphorylated at a histidine residue in the dimerization domain and transfers its phosphate group to the conserved aspartic acid residue in the regulatory domain of WalR. In turn, WalR binds to the upstream promoter regions of the target genes to positively and negatively regulate their expression.</text>
</comment>
<comment type="catalytic activity">
    <reaction evidence="3">
        <text>ATP + protein L-histidine = ADP + protein N-phospho-L-histidine.</text>
        <dbReference type="EC" id="2.7.13.3"/>
    </reaction>
</comment>
<comment type="activity regulation">
    <text evidence="3">By zinc. Zinc-binding negatively regulates WalK kinase activity and thus autophosphorylation.</text>
</comment>
<comment type="subunit">
    <text evidence="2">Forms homodimers. Forms homooligomers.</text>
</comment>
<comment type="subcellular location">
    <subcellularLocation>
        <location evidence="9">Cell membrane</location>
        <topology evidence="4">Multi-pass membrane protein</topology>
    </subcellularLocation>
</comment>
<comment type="PTM">
    <text evidence="3">Autophosphorylated.</text>
</comment>
<proteinExistence type="inferred from homology"/>
<accession>A7WWQ7</accession>
<sequence>MKWLKQLQSLHTKLVIVYVLLIIIGMQIIGLYFTNNLEKELLDNFKKNITQYAKQLEISIEKVYDEKGSVNAQKDIQNLLSEYANRQEIGEIRFIDKDQIIIATTKQSNRSLINQKANDSSVQKALSLGQSNDHLILKDYGGGKDRVWVYNIPVKVDKKVIGNIYIESKINDVYNQLNNINQIFIVGTAISLLITVILGFFIARTITKPITDMRNQTVEMSRGNYTQRVKIYGNDEIGELALAFNNLSKRVQEAQANTESEKRRLDSVITHMSDGIIATDRRGRIRIVNDMALKMLGMAKEDIIGYYMLSVLSLEDEFKLEEIQENNDSFLLDLNEEEGLIARVNFSTIVQETGFVTGYIAVLHDVTEQQQVERERREFVANVSHELRTPLTSMNSYIEALEEGAWKDEELAPQFLSVTREETERMIRLVNDLLQLSKMDNESDQINKEIIDFNMFINKIINRHEMSAKDTTFIRDIPKKTIFTEFDPDKMTQVFDNVITNAMKYSRGDKRVEFHVKQNPLYNRMTIRIKDNGIGIPINKVDKIFDRFYRVDKARTRKMGGTGLGLAISKEIVEAHNGRIWANSVEGQGTSIFITLPCEVIEDGDWDE</sequence>
<reference key="1">
    <citation type="journal article" date="2008" name="Antimicrob. Agents Chemother.">
        <title>Mutated response regulator graR is responsible for phenotypic conversion of Staphylococcus aureus from heterogeneous vancomycin-intermediate resistance to vancomycin-intermediate resistance.</title>
        <authorList>
            <person name="Neoh H.-M."/>
            <person name="Cui L."/>
            <person name="Yuzawa H."/>
            <person name="Takeuchi F."/>
            <person name="Matsuo M."/>
            <person name="Hiramatsu K."/>
        </authorList>
    </citation>
    <scope>NUCLEOTIDE SEQUENCE [LARGE SCALE GENOMIC DNA]</scope>
    <source>
        <strain>Mu3 / ATCC 700698</strain>
    </source>
</reference>
<organism>
    <name type="scientific">Staphylococcus aureus (strain Mu3 / ATCC 700698)</name>
    <dbReference type="NCBI Taxonomy" id="418127"/>
    <lineage>
        <taxon>Bacteria</taxon>
        <taxon>Bacillati</taxon>
        <taxon>Bacillota</taxon>
        <taxon>Bacilli</taxon>
        <taxon>Bacillales</taxon>
        <taxon>Staphylococcaceae</taxon>
        <taxon>Staphylococcus</taxon>
    </lineage>
</organism>
<evidence type="ECO:0000250" key="1">
    <source>
        <dbReference type="UniProtKB" id="O34206"/>
    </source>
</evidence>
<evidence type="ECO:0000250" key="2">
    <source>
        <dbReference type="UniProtKB" id="Q2G2U4"/>
    </source>
</evidence>
<evidence type="ECO:0000250" key="3">
    <source>
        <dbReference type="UniProtKB" id="Q9RDT3"/>
    </source>
</evidence>
<evidence type="ECO:0000255" key="4"/>
<evidence type="ECO:0000255" key="5">
    <source>
        <dbReference type="PROSITE-ProRule" id="PRU00102"/>
    </source>
</evidence>
<evidence type="ECO:0000255" key="6">
    <source>
        <dbReference type="PROSITE-ProRule" id="PRU00107"/>
    </source>
</evidence>
<evidence type="ECO:0000255" key="7">
    <source>
        <dbReference type="PROSITE-ProRule" id="PRU00140"/>
    </source>
</evidence>
<evidence type="ECO:0000255" key="8">
    <source>
        <dbReference type="PROSITE-ProRule" id="PRU00141"/>
    </source>
</evidence>
<evidence type="ECO:0000305" key="9"/>
<keyword id="KW-0067">ATP-binding</keyword>
<keyword id="KW-1003">Cell membrane</keyword>
<keyword id="KW-0418">Kinase</keyword>
<keyword id="KW-0472">Membrane</keyword>
<keyword id="KW-0479">Metal-binding</keyword>
<keyword id="KW-0547">Nucleotide-binding</keyword>
<keyword id="KW-0597">Phosphoprotein</keyword>
<keyword id="KW-0808">Transferase</keyword>
<keyword id="KW-0812">Transmembrane</keyword>
<keyword id="KW-1133">Transmembrane helix</keyword>
<keyword id="KW-0902">Two-component regulatory system</keyword>
<keyword id="KW-0862">Zinc</keyword>
<protein>
    <recommendedName>
        <fullName evidence="9">Sensor protein kinase WalK</fullName>
        <ecNumber evidence="1">2.7.13.3</ecNumber>
    </recommendedName>
</protein>
<gene>
    <name type="primary">walK</name>
    <name type="synonym">vicK</name>
    <name type="ordered locus">SAHV_0019</name>
</gene>